<feature type="chain" id="PRO_0000176043" description="Chemotaxis protein methyltransferase 2">
    <location>
        <begin position="1"/>
        <end position="288"/>
    </location>
</feature>
<feature type="domain" description="CheR-type methyltransferase" evidence="2">
    <location>
        <begin position="1"/>
        <end position="280"/>
    </location>
</feature>
<feature type="binding site" evidence="1">
    <location>
        <position position="76"/>
    </location>
    <ligand>
        <name>S-adenosyl-L-methionine</name>
        <dbReference type="ChEBI" id="CHEBI:59789"/>
    </ligand>
</feature>
<feature type="binding site" evidence="1">
    <location>
        <position position="78"/>
    </location>
    <ligand>
        <name>S-adenosyl-L-methionine</name>
        <dbReference type="ChEBI" id="CHEBI:59789"/>
    </ligand>
</feature>
<feature type="binding site" evidence="1">
    <location>
        <position position="82"/>
    </location>
    <ligand>
        <name>S-adenosyl-L-methionine</name>
        <dbReference type="ChEBI" id="CHEBI:59789"/>
    </ligand>
</feature>
<feature type="binding site" evidence="1">
    <location>
        <position position="119"/>
    </location>
    <ligand>
        <name>S-adenosyl-L-methionine</name>
        <dbReference type="ChEBI" id="CHEBI:59789"/>
    </ligand>
</feature>
<feature type="binding site" evidence="1">
    <location>
        <position position="145"/>
    </location>
    <ligand>
        <name>S-adenosyl-L-methionine</name>
        <dbReference type="ChEBI" id="CHEBI:59789"/>
    </ligand>
</feature>
<feature type="binding site" evidence="1">
    <location>
        <begin position="200"/>
        <end position="201"/>
    </location>
    <ligand>
        <name>S-adenosyl-L-methionine</name>
        <dbReference type="ChEBI" id="CHEBI:59789"/>
    </ligand>
</feature>
<feature type="binding site" evidence="1">
    <location>
        <begin position="219"/>
        <end position="220"/>
    </location>
    <ligand>
        <name>S-adenosyl-L-methionine</name>
        <dbReference type="ChEBI" id="CHEBI:59789"/>
    </ligand>
</feature>
<sequence>MNEIVITDTDFCRFRDYFYQKTGIFFENSKRYFVDKRLLQRIELTEHQSFRGYFTYLRFQASGEELQAVINALTVNETYFFREISQLESLVEEVLDDIVRHRPGELIRIWSMPCSSGEEPYSIVLFLLEHWPKLEQVDIEIIASDIDTGILQKAAQGIFSARSVKNLPNSSLNKYFSLRADGSYQLIDDIRQSVRFTQTNLNNRAEVQKLGAMDVIFCRNLLIYFDDISRRNAVESFYEQLNPGGVLFLGHSESMSRISSIFHVKRFRKSTGYYKPHKGKSDEKSNGR</sequence>
<proteinExistence type="inferred from homology"/>
<name>CHER2_VIBCH</name>
<accession>Q9KS61</accession>
<reference key="1">
    <citation type="journal article" date="2000" name="Nature">
        <title>DNA sequence of both chromosomes of the cholera pathogen Vibrio cholerae.</title>
        <authorList>
            <person name="Heidelberg J.F."/>
            <person name="Eisen J.A."/>
            <person name="Nelson W.C."/>
            <person name="Clayton R.A."/>
            <person name="Gwinn M.L."/>
            <person name="Dodson R.J."/>
            <person name="Haft D.H."/>
            <person name="Hickey E.K."/>
            <person name="Peterson J.D."/>
            <person name="Umayam L.A."/>
            <person name="Gill S.R."/>
            <person name="Nelson K.E."/>
            <person name="Read T.D."/>
            <person name="Tettelin H."/>
            <person name="Richardson D.L."/>
            <person name="Ermolaeva M.D."/>
            <person name="Vamathevan J.J."/>
            <person name="Bass S."/>
            <person name="Qin H."/>
            <person name="Dragoi I."/>
            <person name="Sellers P."/>
            <person name="McDonald L.A."/>
            <person name="Utterback T.R."/>
            <person name="Fleischmann R.D."/>
            <person name="Nierman W.C."/>
            <person name="White O."/>
            <person name="Salzberg S.L."/>
            <person name="Smith H.O."/>
            <person name="Colwell R.R."/>
            <person name="Mekalanos J.J."/>
            <person name="Venter J.C."/>
            <person name="Fraser C.M."/>
        </authorList>
    </citation>
    <scope>NUCLEOTIDE SEQUENCE [LARGE SCALE GENOMIC DNA]</scope>
    <source>
        <strain>ATCC 39315 / El Tor Inaba N16961</strain>
    </source>
</reference>
<evidence type="ECO:0000250" key="1"/>
<evidence type="ECO:0000255" key="2">
    <source>
        <dbReference type="PROSITE-ProRule" id="PRU00051"/>
    </source>
</evidence>
<protein>
    <recommendedName>
        <fullName>Chemotaxis protein methyltransferase 2</fullName>
        <ecNumber>2.1.1.80</ecNumber>
    </recommendedName>
</protein>
<gene>
    <name type="primary">cheR2</name>
    <name type="ordered locus">VC_1399</name>
</gene>
<keyword id="KW-0489">Methyltransferase</keyword>
<keyword id="KW-1185">Reference proteome</keyword>
<keyword id="KW-0949">S-adenosyl-L-methionine</keyword>
<keyword id="KW-0808">Transferase</keyword>
<dbReference type="EC" id="2.1.1.80"/>
<dbReference type="EMBL" id="AE003852">
    <property type="protein sequence ID" value="AAF94556.1"/>
    <property type="molecule type" value="Genomic_DNA"/>
</dbReference>
<dbReference type="PIR" id="G82205">
    <property type="entry name" value="G82205"/>
</dbReference>
<dbReference type="RefSeq" id="NP_231042.1">
    <property type="nucleotide sequence ID" value="NC_002505.1"/>
</dbReference>
<dbReference type="RefSeq" id="WP_001002908.1">
    <property type="nucleotide sequence ID" value="NZ_LT906614.1"/>
</dbReference>
<dbReference type="SMR" id="Q9KS61"/>
<dbReference type="STRING" id="243277.VC_1399"/>
<dbReference type="DNASU" id="2614031"/>
<dbReference type="EnsemblBacteria" id="AAF94556">
    <property type="protein sequence ID" value="AAF94556"/>
    <property type="gene ID" value="VC_1399"/>
</dbReference>
<dbReference type="KEGG" id="vch:VC_1399"/>
<dbReference type="PATRIC" id="fig|243277.26.peg.1330"/>
<dbReference type="eggNOG" id="COG1352">
    <property type="taxonomic scope" value="Bacteria"/>
</dbReference>
<dbReference type="HOGENOM" id="CLU_025854_0_1_6"/>
<dbReference type="Proteomes" id="UP000000584">
    <property type="component" value="Chromosome 1"/>
</dbReference>
<dbReference type="GO" id="GO:0008276">
    <property type="term" value="F:protein methyltransferase activity"/>
    <property type="evidence" value="ECO:0000318"/>
    <property type="project" value="GO_Central"/>
</dbReference>
<dbReference type="GO" id="GO:0008983">
    <property type="term" value="F:protein-glutamate O-methyltransferase activity"/>
    <property type="evidence" value="ECO:0007669"/>
    <property type="project" value="UniProtKB-EC"/>
</dbReference>
<dbReference type="GO" id="GO:0032259">
    <property type="term" value="P:methylation"/>
    <property type="evidence" value="ECO:0007669"/>
    <property type="project" value="UniProtKB-KW"/>
</dbReference>
<dbReference type="Gene3D" id="1.10.155.10">
    <property type="entry name" value="Chemotaxis receptor methyltransferase CheR, N-terminal domain"/>
    <property type="match status" value="1"/>
</dbReference>
<dbReference type="Gene3D" id="3.40.50.150">
    <property type="entry name" value="Vaccinia Virus protein VP39"/>
    <property type="match status" value="1"/>
</dbReference>
<dbReference type="InterPro" id="IPR050903">
    <property type="entry name" value="Bact_Chemotaxis_MeTrfase"/>
</dbReference>
<dbReference type="InterPro" id="IPR026024">
    <property type="entry name" value="Chemotaxis_MeTrfase_CheR"/>
</dbReference>
<dbReference type="InterPro" id="IPR022642">
    <property type="entry name" value="CheR_C"/>
</dbReference>
<dbReference type="InterPro" id="IPR000780">
    <property type="entry name" value="CheR_MeTrfase"/>
</dbReference>
<dbReference type="InterPro" id="IPR022641">
    <property type="entry name" value="CheR_N"/>
</dbReference>
<dbReference type="InterPro" id="IPR036804">
    <property type="entry name" value="CheR_N_sf"/>
</dbReference>
<dbReference type="InterPro" id="IPR029063">
    <property type="entry name" value="SAM-dependent_MTases_sf"/>
</dbReference>
<dbReference type="PANTHER" id="PTHR24422">
    <property type="entry name" value="CHEMOTAXIS PROTEIN METHYLTRANSFERASE"/>
    <property type="match status" value="1"/>
</dbReference>
<dbReference type="PANTHER" id="PTHR24422:SF10">
    <property type="entry name" value="CHEMOTAXIS PROTEIN METHYLTRANSFERASE 2"/>
    <property type="match status" value="1"/>
</dbReference>
<dbReference type="Pfam" id="PF01739">
    <property type="entry name" value="CheR"/>
    <property type="match status" value="1"/>
</dbReference>
<dbReference type="Pfam" id="PF03705">
    <property type="entry name" value="CheR_N"/>
    <property type="match status" value="1"/>
</dbReference>
<dbReference type="PIRSF" id="PIRSF000410">
    <property type="entry name" value="CheR"/>
    <property type="match status" value="1"/>
</dbReference>
<dbReference type="PRINTS" id="PR00996">
    <property type="entry name" value="CHERMTFRASE"/>
</dbReference>
<dbReference type="SMART" id="SM00138">
    <property type="entry name" value="MeTrc"/>
    <property type="match status" value="1"/>
</dbReference>
<dbReference type="SUPFAM" id="SSF47757">
    <property type="entry name" value="Chemotaxis receptor methyltransferase CheR, N-terminal domain"/>
    <property type="match status" value="1"/>
</dbReference>
<dbReference type="SUPFAM" id="SSF53335">
    <property type="entry name" value="S-adenosyl-L-methionine-dependent methyltransferases"/>
    <property type="match status" value="1"/>
</dbReference>
<dbReference type="PROSITE" id="PS50123">
    <property type="entry name" value="CHER"/>
    <property type="match status" value="1"/>
</dbReference>
<organism>
    <name type="scientific">Vibrio cholerae serotype O1 (strain ATCC 39315 / El Tor Inaba N16961)</name>
    <dbReference type="NCBI Taxonomy" id="243277"/>
    <lineage>
        <taxon>Bacteria</taxon>
        <taxon>Pseudomonadati</taxon>
        <taxon>Pseudomonadota</taxon>
        <taxon>Gammaproteobacteria</taxon>
        <taxon>Vibrionales</taxon>
        <taxon>Vibrionaceae</taxon>
        <taxon>Vibrio</taxon>
    </lineage>
</organism>
<comment type="function">
    <text evidence="1">Methylation of the membrane-bound methyl-accepting chemotaxis proteins (MCP) to form gamma-glutamyl methyl ester residues in MCP.</text>
</comment>
<comment type="catalytic activity">
    <reaction>
        <text>L-glutamyl-[protein] + S-adenosyl-L-methionine = [protein]-L-glutamate 5-O-methyl ester + S-adenosyl-L-homocysteine</text>
        <dbReference type="Rhea" id="RHEA:24452"/>
        <dbReference type="Rhea" id="RHEA-COMP:10208"/>
        <dbReference type="Rhea" id="RHEA-COMP:10311"/>
        <dbReference type="ChEBI" id="CHEBI:29973"/>
        <dbReference type="ChEBI" id="CHEBI:57856"/>
        <dbReference type="ChEBI" id="CHEBI:59789"/>
        <dbReference type="ChEBI" id="CHEBI:82795"/>
        <dbReference type="EC" id="2.1.1.80"/>
    </reaction>
</comment>